<feature type="chain" id="PRO_0000059029" description="Photosystem II reaction center protein Psb30">
    <location>
        <begin position="1"/>
        <end position="33"/>
    </location>
</feature>
<feature type="transmembrane region" description="Helical" evidence="1">
    <location>
        <begin position="5"/>
        <end position="25"/>
    </location>
</feature>
<comment type="function">
    <text evidence="1">A core subunit of photosystem II (PSII), probably helps stabilize the reaction center.</text>
</comment>
<comment type="subunit">
    <text evidence="1">PSII is composed of 1 copy each of membrane proteins PsbA, PsbB, PsbC, PsbD, PsbE, PsbF, PsbH, PsbI, PsbJ, PsbK, PsbL, PsbM, PsbT, PsbX, PsbY, PsbZ, Psb30/Ycf12, peripheral proteins of the oxygen-evolving complex and a large number of cofactors. It forms dimeric complexes.</text>
</comment>
<comment type="subcellular location">
    <subcellularLocation>
        <location evidence="1">Plastid</location>
        <location evidence="1">Chloroplast thylakoid membrane</location>
        <topology evidence="1">Single-pass membrane protein</topology>
    </subcellularLocation>
</comment>
<comment type="similarity">
    <text evidence="1">Belongs to the Psb30/Ycf12 family.</text>
</comment>
<evidence type="ECO:0000255" key="1">
    <source>
        <dbReference type="HAMAP-Rule" id="MF_01329"/>
    </source>
</evidence>
<sequence>MNLEVIAQLTVLALIVISGPLVIALSAARKGNL</sequence>
<name>PSB30_HUPLU</name>
<protein>
    <recommendedName>
        <fullName evidence="1">Photosystem II reaction center protein Psb30</fullName>
    </recommendedName>
    <alternativeName>
        <fullName evidence="1">Photosystem II reaction center protein Ycf12</fullName>
    </alternativeName>
</protein>
<gene>
    <name evidence="1" type="primary">psb30</name>
    <name evidence="1" type="synonym">ycf12</name>
</gene>
<reference key="1">
    <citation type="journal article" date="2005" name="Gene">
        <title>The first complete chloroplast genome sequence of a lycophyte, Huperzia lucidula (Lycopodiaceae).</title>
        <authorList>
            <person name="Wolf P.G."/>
            <person name="Karol K.G."/>
            <person name="Mandoli D.F."/>
            <person name="Kuehl J.V."/>
            <person name="Arumuganathan K."/>
            <person name="Ellis M.W."/>
            <person name="Mishler B.D."/>
            <person name="Kelch D.G."/>
            <person name="Olmstead R.G."/>
            <person name="Boore J.L."/>
        </authorList>
    </citation>
    <scope>NUCLEOTIDE SEQUENCE [LARGE SCALE GENOMIC DNA]</scope>
</reference>
<proteinExistence type="inferred from homology"/>
<dbReference type="EMBL" id="AY660566">
    <property type="protein sequence ID" value="AAT80739.1"/>
    <property type="molecule type" value="Genomic_DNA"/>
</dbReference>
<dbReference type="RefSeq" id="YP_209543.1">
    <property type="nucleotide sequence ID" value="NC_006861.1"/>
</dbReference>
<dbReference type="SMR" id="Q5SCX7"/>
<dbReference type="GeneID" id="3283720"/>
<dbReference type="GO" id="GO:0009535">
    <property type="term" value="C:chloroplast thylakoid membrane"/>
    <property type="evidence" value="ECO:0007669"/>
    <property type="project" value="UniProtKB-SubCell"/>
</dbReference>
<dbReference type="GO" id="GO:0009523">
    <property type="term" value="C:photosystem II"/>
    <property type="evidence" value="ECO:0007669"/>
    <property type="project" value="UniProtKB-KW"/>
</dbReference>
<dbReference type="GO" id="GO:0015979">
    <property type="term" value="P:photosynthesis"/>
    <property type="evidence" value="ECO:0007669"/>
    <property type="project" value="UniProtKB-KW"/>
</dbReference>
<dbReference type="HAMAP" id="MF_01329">
    <property type="entry name" value="PSII_Psb30_Ycf12"/>
    <property type="match status" value="1"/>
</dbReference>
<dbReference type="InterPro" id="IPR010284">
    <property type="entry name" value="PSII_Ycf12_core-subunit"/>
</dbReference>
<dbReference type="NCBIfam" id="NF010239">
    <property type="entry name" value="PRK13686.1"/>
    <property type="match status" value="1"/>
</dbReference>
<dbReference type="Pfam" id="PF05969">
    <property type="entry name" value="PSII_Ycf12"/>
    <property type="match status" value="1"/>
</dbReference>
<geneLocation type="chloroplast"/>
<accession>Q5SCX7</accession>
<keyword id="KW-0150">Chloroplast</keyword>
<keyword id="KW-0472">Membrane</keyword>
<keyword id="KW-0602">Photosynthesis</keyword>
<keyword id="KW-0604">Photosystem II</keyword>
<keyword id="KW-0934">Plastid</keyword>
<keyword id="KW-0793">Thylakoid</keyword>
<keyword id="KW-0812">Transmembrane</keyword>
<keyword id="KW-1133">Transmembrane helix</keyword>
<organism>
    <name type="scientific">Huperzia lucidula</name>
    <name type="common">Shining clubmoss</name>
    <name type="synonym">Lycopodium lucidulum</name>
    <dbReference type="NCBI Taxonomy" id="37429"/>
    <lineage>
        <taxon>Eukaryota</taxon>
        <taxon>Viridiplantae</taxon>
        <taxon>Streptophyta</taxon>
        <taxon>Embryophyta</taxon>
        <taxon>Tracheophyta</taxon>
        <taxon>Lycopodiopsida</taxon>
        <taxon>Lycopodiales</taxon>
        <taxon>Lycopodiaceae</taxon>
        <taxon>Huperzioideae</taxon>
        <taxon>Huperzia</taxon>
    </lineage>
</organism>